<comment type="function">
    <text evidence="1">Catalyzes the deamination of dCTP to dUTP.</text>
</comment>
<comment type="catalytic activity">
    <reaction evidence="1">
        <text>dCTP + H2O + H(+) = dUTP + NH4(+)</text>
        <dbReference type="Rhea" id="RHEA:22680"/>
        <dbReference type="ChEBI" id="CHEBI:15377"/>
        <dbReference type="ChEBI" id="CHEBI:15378"/>
        <dbReference type="ChEBI" id="CHEBI:28938"/>
        <dbReference type="ChEBI" id="CHEBI:61481"/>
        <dbReference type="ChEBI" id="CHEBI:61555"/>
        <dbReference type="EC" id="3.5.4.13"/>
    </reaction>
</comment>
<comment type="pathway">
    <text evidence="1">Pyrimidine metabolism; dUMP biosynthesis; dUMP from dCTP (dUTP route): step 1/2.</text>
</comment>
<comment type="subunit">
    <text evidence="1">Homotrimer.</text>
</comment>
<comment type="similarity">
    <text evidence="1">Belongs to the dCTP deaminase family.</text>
</comment>
<gene>
    <name evidence="1" type="primary">dcd</name>
    <name type="ordered locus">GAU_1663</name>
</gene>
<dbReference type="EC" id="3.5.4.13" evidence="1"/>
<dbReference type="EMBL" id="AP009153">
    <property type="protein sequence ID" value="BAH38705.1"/>
    <property type="molecule type" value="Genomic_DNA"/>
</dbReference>
<dbReference type="RefSeq" id="WP_012683152.1">
    <property type="nucleotide sequence ID" value="NC_012489.1"/>
</dbReference>
<dbReference type="SMR" id="C1A8Z5"/>
<dbReference type="STRING" id="379066.GAU_1663"/>
<dbReference type="KEGG" id="gau:GAU_1663"/>
<dbReference type="eggNOG" id="COG0717">
    <property type="taxonomic scope" value="Bacteria"/>
</dbReference>
<dbReference type="HOGENOM" id="CLU_087476_4_0_0"/>
<dbReference type="OrthoDB" id="9780202at2"/>
<dbReference type="UniPathway" id="UPA00610">
    <property type="reaction ID" value="UER00665"/>
</dbReference>
<dbReference type="Proteomes" id="UP000002209">
    <property type="component" value="Chromosome"/>
</dbReference>
<dbReference type="GO" id="GO:0008829">
    <property type="term" value="F:dCTP deaminase activity"/>
    <property type="evidence" value="ECO:0007669"/>
    <property type="project" value="UniProtKB-UniRule"/>
</dbReference>
<dbReference type="GO" id="GO:0000166">
    <property type="term" value="F:nucleotide binding"/>
    <property type="evidence" value="ECO:0007669"/>
    <property type="project" value="UniProtKB-KW"/>
</dbReference>
<dbReference type="GO" id="GO:0006226">
    <property type="term" value="P:dUMP biosynthetic process"/>
    <property type="evidence" value="ECO:0007669"/>
    <property type="project" value="UniProtKB-UniPathway"/>
</dbReference>
<dbReference type="GO" id="GO:0006229">
    <property type="term" value="P:dUTP biosynthetic process"/>
    <property type="evidence" value="ECO:0007669"/>
    <property type="project" value="UniProtKB-UniRule"/>
</dbReference>
<dbReference type="GO" id="GO:0015949">
    <property type="term" value="P:nucleobase-containing small molecule interconversion"/>
    <property type="evidence" value="ECO:0007669"/>
    <property type="project" value="TreeGrafter"/>
</dbReference>
<dbReference type="CDD" id="cd07557">
    <property type="entry name" value="trimeric_dUTPase"/>
    <property type="match status" value="1"/>
</dbReference>
<dbReference type="FunFam" id="2.70.40.10:FF:000001">
    <property type="entry name" value="dCTP deaminase"/>
    <property type="match status" value="1"/>
</dbReference>
<dbReference type="Gene3D" id="2.70.40.10">
    <property type="match status" value="1"/>
</dbReference>
<dbReference type="HAMAP" id="MF_00146">
    <property type="entry name" value="dCTP_deaminase"/>
    <property type="match status" value="1"/>
</dbReference>
<dbReference type="InterPro" id="IPR011962">
    <property type="entry name" value="dCTP_deaminase"/>
</dbReference>
<dbReference type="InterPro" id="IPR036157">
    <property type="entry name" value="dUTPase-like_sf"/>
</dbReference>
<dbReference type="InterPro" id="IPR033704">
    <property type="entry name" value="dUTPase_trimeric"/>
</dbReference>
<dbReference type="NCBIfam" id="TIGR02274">
    <property type="entry name" value="dCTP_deam"/>
    <property type="match status" value="1"/>
</dbReference>
<dbReference type="PANTHER" id="PTHR42680">
    <property type="entry name" value="DCTP DEAMINASE"/>
    <property type="match status" value="1"/>
</dbReference>
<dbReference type="PANTHER" id="PTHR42680:SF3">
    <property type="entry name" value="DCTP DEAMINASE"/>
    <property type="match status" value="1"/>
</dbReference>
<dbReference type="Pfam" id="PF22769">
    <property type="entry name" value="DCD"/>
    <property type="match status" value="1"/>
</dbReference>
<dbReference type="SUPFAM" id="SSF51283">
    <property type="entry name" value="dUTPase-like"/>
    <property type="match status" value="1"/>
</dbReference>
<feature type="chain" id="PRO_1000203359" description="dCTP deaminase">
    <location>
        <begin position="1"/>
        <end position="184"/>
    </location>
</feature>
<feature type="active site" description="Proton donor/acceptor" evidence="1">
    <location>
        <position position="133"/>
    </location>
</feature>
<feature type="binding site" evidence="1">
    <location>
        <begin position="107"/>
        <end position="112"/>
    </location>
    <ligand>
        <name>dCTP</name>
        <dbReference type="ChEBI" id="CHEBI:61481"/>
    </ligand>
</feature>
<feature type="binding site" evidence="1">
    <location>
        <begin position="131"/>
        <end position="133"/>
    </location>
    <ligand>
        <name>dCTP</name>
        <dbReference type="ChEBI" id="CHEBI:61481"/>
    </ligand>
</feature>
<feature type="binding site" evidence="1">
    <location>
        <position position="152"/>
    </location>
    <ligand>
        <name>dCTP</name>
        <dbReference type="ChEBI" id="CHEBI:61481"/>
    </ligand>
</feature>
<feature type="binding site" evidence="1">
    <location>
        <position position="166"/>
    </location>
    <ligand>
        <name>dCTP</name>
        <dbReference type="ChEBI" id="CHEBI:61481"/>
    </ligand>
</feature>
<feature type="binding site" evidence="1">
    <location>
        <position position="176"/>
    </location>
    <ligand>
        <name>dCTP</name>
        <dbReference type="ChEBI" id="CHEBI:61481"/>
    </ligand>
</feature>
<evidence type="ECO:0000255" key="1">
    <source>
        <dbReference type="HAMAP-Rule" id="MF_00146"/>
    </source>
</evidence>
<organism>
    <name type="scientific">Gemmatimonas aurantiaca (strain DSM 14586 / JCM 11422 / NBRC 100505 / T-27)</name>
    <dbReference type="NCBI Taxonomy" id="379066"/>
    <lineage>
        <taxon>Bacteria</taxon>
        <taxon>Pseudomonadati</taxon>
        <taxon>Gemmatimonadota</taxon>
        <taxon>Gemmatimonadia</taxon>
        <taxon>Gemmatimonadales</taxon>
        <taxon>Gemmatimonadaceae</taxon>
        <taxon>Gemmatimonas</taxon>
    </lineage>
</organism>
<keyword id="KW-0378">Hydrolase</keyword>
<keyword id="KW-0546">Nucleotide metabolism</keyword>
<keyword id="KW-0547">Nucleotide-binding</keyword>
<keyword id="KW-1185">Reference proteome</keyword>
<reference key="1">
    <citation type="submission" date="2006-03" db="EMBL/GenBank/DDBJ databases">
        <title>Complete genome sequence of Gemmatimonas aurantiaca T-27 that represents a novel phylum Gemmatimonadetes.</title>
        <authorList>
            <person name="Takasaki K."/>
            <person name="Ichikawa N."/>
            <person name="Miura H."/>
            <person name="Matsushita S."/>
            <person name="Watanabe Y."/>
            <person name="Oguchi A."/>
            <person name="Ankai A."/>
            <person name="Yashiro I."/>
            <person name="Takahashi M."/>
            <person name="Terui Y."/>
            <person name="Fukui S."/>
            <person name="Yokoyama H."/>
            <person name="Tanikawa S."/>
            <person name="Hanada S."/>
            <person name="Kamagata Y."/>
            <person name="Fujita N."/>
        </authorList>
    </citation>
    <scope>NUCLEOTIDE SEQUENCE [LARGE SCALE GENOMIC DNA]</scope>
    <source>
        <strain>DSM 14586 / JCM 11422 / NBRC 100505 / T-27</strain>
    </source>
</reference>
<sequence length="184" mass="20719">MGLCSDRWITRMSREHGMIEPFEDRQVRQGVISYGVSSYGYDMRVAREFKIFTNVLSSVVDPKAFDPKSFVEFEGDVCIVPPNSFALARSVEYFRIPRNVLTLTVGKSTYARCGIITNVTPFEPEWEGYVTLEISNTTPLPAKIYANEGIAQVVFFTGDEPPEVSYGDKKGKYQGQHGVTLPRI</sequence>
<name>DCD_GEMAT</name>
<accession>C1A8Z5</accession>
<proteinExistence type="inferred from homology"/>
<protein>
    <recommendedName>
        <fullName evidence="1">dCTP deaminase</fullName>
        <ecNumber evidence="1">3.5.4.13</ecNumber>
    </recommendedName>
    <alternativeName>
        <fullName evidence="1">Deoxycytidine triphosphate deaminase</fullName>
    </alternativeName>
</protein>